<evidence type="ECO:0000250" key="1"/>
<evidence type="ECO:0000305" key="2"/>
<comment type="function">
    <text evidence="1">One of the primary rRNA binding proteins, it binds directly to 16S rRNA central domain where it helps coordinate assembly of the platform of the 30S subunit.</text>
</comment>
<comment type="subunit">
    <text evidence="1">Part of the 30S ribosomal subunit.</text>
</comment>
<comment type="subcellular location">
    <subcellularLocation>
        <location>Plastid</location>
        <location>Chloroplast</location>
    </subcellularLocation>
</comment>
<comment type="similarity">
    <text evidence="2">Belongs to the universal ribosomal protein uS8 family.</text>
</comment>
<organism>
    <name type="scientific">Acorus calamus</name>
    <name type="common">Sweet flag</name>
    <dbReference type="NCBI Taxonomy" id="4465"/>
    <lineage>
        <taxon>Eukaryota</taxon>
        <taxon>Viridiplantae</taxon>
        <taxon>Streptophyta</taxon>
        <taxon>Embryophyta</taxon>
        <taxon>Tracheophyta</taxon>
        <taxon>Spermatophyta</taxon>
        <taxon>Magnoliopsida</taxon>
        <taxon>Liliopsida</taxon>
        <taxon>Acoraceae</taxon>
        <taxon>Acorus</taxon>
    </lineage>
</organism>
<name>RR8_ACOCL</name>
<gene>
    <name type="primary">rps8</name>
</gene>
<reference key="1">
    <citation type="journal article" date="2005" name="Mol. Biol. Evol.">
        <title>Analysis of Acorus calamus chloroplast genome and its phylogenetic implications.</title>
        <authorList>
            <person name="Goremykin V.V."/>
            <person name="Holland B."/>
            <person name="Hirsch-Ernst K.I."/>
            <person name="Hellwig F.H."/>
        </authorList>
    </citation>
    <scope>NUCLEOTIDE SEQUENCE [LARGE SCALE GENOMIC DNA]</scope>
</reference>
<protein>
    <recommendedName>
        <fullName evidence="2">Small ribosomal subunit protein uS8c</fullName>
    </recommendedName>
    <alternativeName>
        <fullName>30S ribosomal protein S8, chloroplastic</fullName>
    </alternativeName>
</protein>
<accession>Q3V4Z8</accession>
<geneLocation type="chloroplast"/>
<feature type="chain" id="PRO_0000225904" description="Small ribosomal subunit protein uS8c">
    <location>
        <begin position="1"/>
        <end position="132"/>
    </location>
</feature>
<keyword id="KW-0150">Chloroplast</keyword>
<keyword id="KW-0934">Plastid</keyword>
<keyword id="KW-0687">Ribonucleoprotein</keyword>
<keyword id="KW-0689">Ribosomal protein</keyword>
<keyword id="KW-0694">RNA-binding</keyword>
<keyword id="KW-0699">rRNA-binding</keyword>
<proteinExistence type="inferred from homology"/>
<dbReference type="EMBL" id="AJ879453">
    <property type="protein sequence ID" value="CAI53830.1"/>
    <property type="molecule type" value="Genomic_DNA"/>
</dbReference>
<dbReference type="RefSeq" id="YP_319799.1">
    <property type="nucleotide sequence ID" value="NC_007407.1"/>
</dbReference>
<dbReference type="SMR" id="Q3V4Z8"/>
<dbReference type="GeneID" id="3677425"/>
<dbReference type="GO" id="GO:0009507">
    <property type="term" value="C:chloroplast"/>
    <property type="evidence" value="ECO:0007669"/>
    <property type="project" value="UniProtKB-SubCell"/>
</dbReference>
<dbReference type="GO" id="GO:1990904">
    <property type="term" value="C:ribonucleoprotein complex"/>
    <property type="evidence" value="ECO:0007669"/>
    <property type="project" value="UniProtKB-KW"/>
</dbReference>
<dbReference type="GO" id="GO:0005840">
    <property type="term" value="C:ribosome"/>
    <property type="evidence" value="ECO:0007669"/>
    <property type="project" value="UniProtKB-KW"/>
</dbReference>
<dbReference type="GO" id="GO:0019843">
    <property type="term" value="F:rRNA binding"/>
    <property type="evidence" value="ECO:0007669"/>
    <property type="project" value="UniProtKB-UniRule"/>
</dbReference>
<dbReference type="GO" id="GO:0003735">
    <property type="term" value="F:structural constituent of ribosome"/>
    <property type="evidence" value="ECO:0007669"/>
    <property type="project" value="InterPro"/>
</dbReference>
<dbReference type="GO" id="GO:0006412">
    <property type="term" value="P:translation"/>
    <property type="evidence" value="ECO:0007669"/>
    <property type="project" value="UniProtKB-UniRule"/>
</dbReference>
<dbReference type="FunFam" id="3.30.1490.10:FF:000001">
    <property type="entry name" value="30S ribosomal protein S8"/>
    <property type="match status" value="1"/>
</dbReference>
<dbReference type="FunFam" id="3.30.1370.30:FF:000004">
    <property type="entry name" value="30S ribosomal protein S8, chloroplastic"/>
    <property type="match status" value="1"/>
</dbReference>
<dbReference type="Gene3D" id="3.30.1370.30">
    <property type="match status" value="1"/>
</dbReference>
<dbReference type="Gene3D" id="3.30.1490.10">
    <property type="match status" value="1"/>
</dbReference>
<dbReference type="HAMAP" id="MF_01302_B">
    <property type="entry name" value="Ribosomal_uS8_B"/>
    <property type="match status" value="1"/>
</dbReference>
<dbReference type="InterPro" id="IPR000630">
    <property type="entry name" value="Ribosomal_uS8"/>
</dbReference>
<dbReference type="InterPro" id="IPR047863">
    <property type="entry name" value="Ribosomal_uS8_CS"/>
</dbReference>
<dbReference type="InterPro" id="IPR035987">
    <property type="entry name" value="Ribosomal_uS8_sf"/>
</dbReference>
<dbReference type="NCBIfam" id="NF001109">
    <property type="entry name" value="PRK00136.1"/>
    <property type="match status" value="1"/>
</dbReference>
<dbReference type="PANTHER" id="PTHR11758">
    <property type="entry name" value="40S RIBOSOMAL PROTEIN S15A"/>
    <property type="match status" value="1"/>
</dbReference>
<dbReference type="Pfam" id="PF00410">
    <property type="entry name" value="Ribosomal_S8"/>
    <property type="match status" value="1"/>
</dbReference>
<dbReference type="SUPFAM" id="SSF56047">
    <property type="entry name" value="Ribosomal protein S8"/>
    <property type="match status" value="1"/>
</dbReference>
<dbReference type="PROSITE" id="PS00053">
    <property type="entry name" value="RIBOSOMAL_S8"/>
    <property type="match status" value="1"/>
</dbReference>
<sequence length="132" mass="14928">MGKDTIADIITSIRNAQMAKKGTVRIASTNLTENVVKILLREGFIENVRKHRESNKDFLVLTLRHRRTRKGIYRTILKRISRPGLRIYSNYQGIPKILGGIGIVIVSTSRGIMTDREARLQGIGGEMLCYIC</sequence>